<gene>
    <name type="primary">TAS2R8</name>
</gene>
<organism>
    <name type="scientific">Gorilla gorilla gorilla</name>
    <name type="common">Western lowland gorilla</name>
    <dbReference type="NCBI Taxonomy" id="9595"/>
    <lineage>
        <taxon>Eukaryota</taxon>
        <taxon>Metazoa</taxon>
        <taxon>Chordata</taxon>
        <taxon>Craniata</taxon>
        <taxon>Vertebrata</taxon>
        <taxon>Euteleostomi</taxon>
        <taxon>Mammalia</taxon>
        <taxon>Eutheria</taxon>
        <taxon>Euarchontoglires</taxon>
        <taxon>Primates</taxon>
        <taxon>Haplorrhini</taxon>
        <taxon>Catarrhini</taxon>
        <taxon>Hominidae</taxon>
        <taxon>Gorilla</taxon>
    </lineage>
</organism>
<accession>Q646A3</accession>
<comment type="function">
    <text evidence="1">Receptor that may play a role in the perception of bitterness and is gustducin-linked. May play a role in sensing the chemical composition of the gastrointestinal content. The activity of this receptor may stimulate alpha gustducin, mediate PLC-beta-2 activation and lead to the gating of TRPM5 (By similarity).</text>
</comment>
<comment type="subcellular location">
    <subcellularLocation>
        <location>Membrane</location>
        <topology>Multi-pass membrane protein</topology>
    </subcellularLocation>
</comment>
<comment type="miscellaneous">
    <text>Most taste cells may be activated by a limited number of bitter compounds; individual taste cells can discriminate among bitter stimuli.</text>
</comment>
<comment type="similarity">
    <text evidence="3">Belongs to the G-protein coupled receptor T2R family.</text>
</comment>
<name>TA2R8_GORGO</name>
<proteinExistence type="inferred from homology"/>
<sequence length="309" mass="35791">MFSPADNIFIILITGEFILGILGNGYIALVNWIDWIKKKKISTIDYILTNLVISRICLISVMVVNGIVIAVYPDVYTKSKLQIAICTFWTFANYLNMWITTCLNVFYFLKIANSSHPLFLWLKQKIDMVVRWILLGCFAISLLVSLIAAIVLSYDYRFHAIAKHKRNITEMFHVSKRPYFEPLTLFNLFAIVPFIVSLISFFLLVRSLWRHTKQIKLYATGGRDPSTEVHVRAIKTMTSFIFLFFLYYISSILVTFSYLMTKYKLAVEFGEIVAILYPLGHSLILIVLNNKLRQTFVRMLTCRKIACVI</sequence>
<feature type="chain" id="PRO_0000082226" description="Taste receptor type 2 member 8">
    <location>
        <begin position="1"/>
        <end position="309"/>
    </location>
</feature>
<feature type="topological domain" description="Extracellular" evidence="2">
    <location>
        <begin position="1"/>
        <end position="7"/>
    </location>
</feature>
<feature type="transmembrane region" description="Helical; Name=1" evidence="2">
    <location>
        <begin position="8"/>
        <end position="28"/>
    </location>
</feature>
<feature type="topological domain" description="Cytoplasmic" evidence="2">
    <location>
        <begin position="29"/>
        <end position="50"/>
    </location>
</feature>
<feature type="transmembrane region" description="Helical; Name=2" evidence="2">
    <location>
        <begin position="51"/>
        <end position="71"/>
    </location>
</feature>
<feature type="topological domain" description="Extracellular" evidence="2">
    <location>
        <begin position="72"/>
        <end position="82"/>
    </location>
</feature>
<feature type="transmembrane region" description="Helical; Name=3" evidence="2">
    <location>
        <begin position="83"/>
        <end position="103"/>
    </location>
</feature>
<feature type="topological domain" description="Cytoplasmic" evidence="2">
    <location>
        <begin position="104"/>
        <end position="131"/>
    </location>
</feature>
<feature type="transmembrane region" description="Helical; Name=4" evidence="2">
    <location>
        <begin position="132"/>
        <end position="152"/>
    </location>
</feature>
<feature type="topological domain" description="Extracellular" evidence="2">
    <location>
        <begin position="153"/>
        <end position="184"/>
    </location>
</feature>
<feature type="transmembrane region" description="Helical; Name=5" evidence="2">
    <location>
        <begin position="185"/>
        <end position="205"/>
    </location>
</feature>
<feature type="topological domain" description="Cytoplasmic" evidence="2">
    <location>
        <begin position="206"/>
        <end position="239"/>
    </location>
</feature>
<feature type="transmembrane region" description="Helical; Name=6" evidence="2">
    <location>
        <begin position="240"/>
        <end position="260"/>
    </location>
</feature>
<feature type="topological domain" description="Extracellular" evidence="2">
    <location>
        <begin position="261"/>
        <end position="266"/>
    </location>
</feature>
<feature type="transmembrane region" description="Helical; Name=7" evidence="2">
    <location>
        <begin position="267"/>
        <end position="287"/>
    </location>
</feature>
<feature type="topological domain" description="Cytoplasmic" evidence="2">
    <location>
        <begin position="288"/>
        <end position="309"/>
    </location>
</feature>
<feature type="glycosylation site" description="N-linked (GlcNAc...) asparagine" evidence="2">
    <location>
        <position position="167"/>
    </location>
</feature>
<reference key="1">
    <citation type="journal article" date="2005" name="Mol. Biol. Evol.">
        <title>Evolution of bitter taste receptors in humans and apes.</title>
        <authorList>
            <person name="Fischer A."/>
            <person name="Gilad Y."/>
            <person name="Man O."/>
            <person name="Paeaebo S."/>
        </authorList>
    </citation>
    <scope>NUCLEOTIDE SEQUENCE [GENOMIC DNA]</scope>
</reference>
<dbReference type="EMBL" id="AY724905">
    <property type="protein sequence ID" value="AAU21116.1"/>
    <property type="molecule type" value="Genomic_DNA"/>
</dbReference>
<dbReference type="RefSeq" id="XP_004052768.1">
    <property type="nucleotide sequence ID" value="XM_004052720.4"/>
</dbReference>
<dbReference type="SMR" id="Q646A3"/>
<dbReference type="FunCoup" id="Q646A3">
    <property type="interactions" value="181"/>
</dbReference>
<dbReference type="GlyCosmos" id="Q646A3">
    <property type="glycosylation" value="1 site, No reported glycans"/>
</dbReference>
<dbReference type="GeneID" id="101131766"/>
<dbReference type="KEGG" id="ggo:101131766"/>
<dbReference type="CTD" id="50836"/>
<dbReference type="InParanoid" id="Q646A3"/>
<dbReference type="OrthoDB" id="14344at9604"/>
<dbReference type="Proteomes" id="UP000001519">
    <property type="component" value="Unplaced"/>
</dbReference>
<dbReference type="GO" id="GO:0016020">
    <property type="term" value="C:membrane"/>
    <property type="evidence" value="ECO:0000318"/>
    <property type="project" value="GO_Central"/>
</dbReference>
<dbReference type="GO" id="GO:0005886">
    <property type="term" value="C:plasma membrane"/>
    <property type="evidence" value="ECO:0007669"/>
    <property type="project" value="UniProtKB-ARBA"/>
</dbReference>
<dbReference type="GO" id="GO:0033038">
    <property type="term" value="F:bitter taste receptor activity"/>
    <property type="evidence" value="ECO:0000318"/>
    <property type="project" value="GO_Central"/>
</dbReference>
<dbReference type="GO" id="GO:0004930">
    <property type="term" value="F:G protein-coupled receptor activity"/>
    <property type="evidence" value="ECO:0007669"/>
    <property type="project" value="UniProtKB-KW"/>
</dbReference>
<dbReference type="GO" id="GO:0001580">
    <property type="term" value="P:detection of chemical stimulus involved in sensory perception of bitter taste"/>
    <property type="evidence" value="ECO:0000318"/>
    <property type="project" value="GO_Central"/>
</dbReference>
<dbReference type="CDD" id="cd15022">
    <property type="entry name" value="7tm_TAS2R8"/>
    <property type="match status" value="1"/>
</dbReference>
<dbReference type="FunFam" id="1.20.1070.10:FF:000042">
    <property type="entry name" value="Taste receptor type 2 member 7"/>
    <property type="match status" value="1"/>
</dbReference>
<dbReference type="Gene3D" id="1.20.1070.10">
    <property type="entry name" value="Rhodopsin 7-helix transmembrane proteins"/>
    <property type="match status" value="1"/>
</dbReference>
<dbReference type="InterPro" id="IPR017452">
    <property type="entry name" value="GPCR_Rhodpsn_7TM"/>
</dbReference>
<dbReference type="InterPro" id="IPR007960">
    <property type="entry name" value="TAS2R"/>
</dbReference>
<dbReference type="PANTHER" id="PTHR11394">
    <property type="entry name" value="TASTE RECEPTOR TYPE 2"/>
    <property type="match status" value="1"/>
</dbReference>
<dbReference type="PANTHER" id="PTHR11394:SF31">
    <property type="entry name" value="TASTE RECEPTOR TYPE 2 MEMBER 8"/>
    <property type="match status" value="1"/>
</dbReference>
<dbReference type="Pfam" id="PF05296">
    <property type="entry name" value="TAS2R"/>
    <property type="match status" value="1"/>
</dbReference>
<dbReference type="SUPFAM" id="SSF81321">
    <property type="entry name" value="Family A G protein-coupled receptor-like"/>
    <property type="match status" value="1"/>
</dbReference>
<dbReference type="PROSITE" id="PS50262">
    <property type="entry name" value="G_PROTEIN_RECEP_F1_2"/>
    <property type="match status" value="1"/>
</dbReference>
<protein>
    <recommendedName>
        <fullName>Taste receptor type 2 member 8</fullName>
        <shortName>T2R8</shortName>
    </recommendedName>
</protein>
<keyword id="KW-0297">G-protein coupled receptor</keyword>
<keyword id="KW-0325">Glycoprotein</keyword>
<keyword id="KW-0472">Membrane</keyword>
<keyword id="KW-0675">Receptor</keyword>
<keyword id="KW-1185">Reference proteome</keyword>
<keyword id="KW-0716">Sensory transduction</keyword>
<keyword id="KW-0919">Taste</keyword>
<keyword id="KW-0807">Transducer</keyword>
<keyword id="KW-0812">Transmembrane</keyword>
<keyword id="KW-1133">Transmembrane helix</keyword>
<evidence type="ECO:0000250" key="1"/>
<evidence type="ECO:0000255" key="2"/>
<evidence type="ECO:0000305" key="3"/>